<name>YAAA_ECO57</name>
<comment type="similarity">
    <text evidence="1">Belongs to the UPF0246 family.</text>
</comment>
<dbReference type="EMBL" id="AE005174">
    <property type="protein sequence ID" value="AAG54306.1"/>
    <property type="molecule type" value="Genomic_DNA"/>
</dbReference>
<dbReference type="EMBL" id="BA000007">
    <property type="protein sequence ID" value="BAB33429.1"/>
    <property type="molecule type" value="Genomic_DNA"/>
</dbReference>
<dbReference type="PIR" id="F85480">
    <property type="entry name" value="F85480"/>
</dbReference>
<dbReference type="PIR" id="F90629">
    <property type="entry name" value="F90629"/>
</dbReference>
<dbReference type="RefSeq" id="NP_308033.1">
    <property type="nucleotide sequence ID" value="NC_002695.1"/>
</dbReference>
<dbReference type="RefSeq" id="WP_000906203.1">
    <property type="nucleotide sequence ID" value="NZ_VOAI01000002.1"/>
</dbReference>
<dbReference type="SMR" id="Q8XA76"/>
<dbReference type="STRING" id="155864.Z0006"/>
<dbReference type="GeneID" id="75169905"/>
<dbReference type="GeneID" id="913395"/>
<dbReference type="KEGG" id="ece:Z0006"/>
<dbReference type="KEGG" id="ecs:ECs_0006"/>
<dbReference type="PATRIC" id="fig|386585.9.peg.103"/>
<dbReference type="eggNOG" id="COG3022">
    <property type="taxonomic scope" value="Bacteria"/>
</dbReference>
<dbReference type="HOGENOM" id="CLU_061989_0_0_6"/>
<dbReference type="OMA" id="WKNGQYK"/>
<dbReference type="Proteomes" id="UP000000558">
    <property type="component" value="Chromosome"/>
</dbReference>
<dbReference type="Proteomes" id="UP000002519">
    <property type="component" value="Chromosome"/>
</dbReference>
<dbReference type="GO" id="GO:0005829">
    <property type="term" value="C:cytosol"/>
    <property type="evidence" value="ECO:0007669"/>
    <property type="project" value="TreeGrafter"/>
</dbReference>
<dbReference type="GO" id="GO:0033194">
    <property type="term" value="P:response to hydroperoxide"/>
    <property type="evidence" value="ECO:0007669"/>
    <property type="project" value="TreeGrafter"/>
</dbReference>
<dbReference type="HAMAP" id="MF_00652">
    <property type="entry name" value="UPF0246"/>
    <property type="match status" value="1"/>
</dbReference>
<dbReference type="InterPro" id="IPR005583">
    <property type="entry name" value="YaaA"/>
</dbReference>
<dbReference type="NCBIfam" id="NF002541">
    <property type="entry name" value="PRK02101.1-1"/>
    <property type="match status" value="1"/>
</dbReference>
<dbReference type="NCBIfam" id="NF002542">
    <property type="entry name" value="PRK02101.1-3"/>
    <property type="match status" value="1"/>
</dbReference>
<dbReference type="PANTHER" id="PTHR30283:SF4">
    <property type="entry name" value="PEROXIDE STRESS RESISTANCE PROTEIN YAAA"/>
    <property type="match status" value="1"/>
</dbReference>
<dbReference type="PANTHER" id="PTHR30283">
    <property type="entry name" value="PEROXIDE STRESS RESPONSE PROTEIN YAAA"/>
    <property type="match status" value="1"/>
</dbReference>
<dbReference type="Pfam" id="PF03883">
    <property type="entry name" value="H2O2_YaaD"/>
    <property type="match status" value="1"/>
</dbReference>
<accession>Q8XA76</accession>
<protein>
    <recommendedName>
        <fullName evidence="1">UPF0246 protein YaaA</fullName>
    </recommendedName>
</protein>
<proteinExistence type="inferred from homology"/>
<feature type="chain" id="PRO_0000203984" description="UPF0246 protein YaaA">
    <location>
        <begin position="1"/>
        <end position="258"/>
    </location>
</feature>
<reference key="1">
    <citation type="journal article" date="2001" name="Nature">
        <title>Genome sequence of enterohaemorrhagic Escherichia coli O157:H7.</title>
        <authorList>
            <person name="Perna N.T."/>
            <person name="Plunkett G. III"/>
            <person name="Burland V."/>
            <person name="Mau B."/>
            <person name="Glasner J.D."/>
            <person name="Rose D.J."/>
            <person name="Mayhew G.F."/>
            <person name="Evans P.S."/>
            <person name="Gregor J."/>
            <person name="Kirkpatrick H.A."/>
            <person name="Posfai G."/>
            <person name="Hackett J."/>
            <person name="Klink S."/>
            <person name="Boutin A."/>
            <person name="Shao Y."/>
            <person name="Miller L."/>
            <person name="Grotbeck E.J."/>
            <person name="Davis N.W."/>
            <person name="Lim A."/>
            <person name="Dimalanta E.T."/>
            <person name="Potamousis K."/>
            <person name="Apodaca J."/>
            <person name="Anantharaman T.S."/>
            <person name="Lin J."/>
            <person name="Yen G."/>
            <person name="Schwartz D.C."/>
            <person name="Welch R.A."/>
            <person name="Blattner F.R."/>
        </authorList>
    </citation>
    <scope>NUCLEOTIDE SEQUENCE [LARGE SCALE GENOMIC DNA]</scope>
    <source>
        <strain>O157:H7 / EDL933 / ATCC 700927 / EHEC</strain>
    </source>
</reference>
<reference key="2">
    <citation type="journal article" date="2001" name="DNA Res.">
        <title>Complete genome sequence of enterohemorrhagic Escherichia coli O157:H7 and genomic comparison with a laboratory strain K-12.</title>
        <authorList>
            <person name="Hayashi T."/>
            <person name="Makino K."/>
            <person name="Ohnishi M."/>
            <person name="Kurokawa K."/>
            <person name="Ishii K."/>
            <person name="Yokoyama K."/>
            <person name="Han C.-G."/>
            <person name="Ohtsubo E."/>
            <person name="Nakayama K."/>
            <person name="Murata T."/>
            <person name="Tanaka M."/>
            <person name="Tobe T."/>
            <person name="Iida T."/>
            <person name="Takami H."/>
            <person name="Honda T."/>
            <person name="Sasakawa C."/>
            <person name="Ogasawara N."/>
            <person name="Yasunaga T."/>
            <person name="Kuhara S."/>
            <person name="Shiba T."/>
            <person name="Hattori M."/>
            <person name="Shinagawa H."/>
        </authorList>
    </citation>
    <scope>NUCLEOTIDE SEQUENCE [LARGE SCALE GENOMIC DNA]</scope>
    <source>
        <strain>O157:H7 / Sakai / RIMD 0509952 / EHEC</strain>
    </source>
</reference>
<sequence length="258" mass="29600">MLILISPAKTLDYQSPLTTTRYTLPELLDNSQQLIHEARKLTPPQISTLMRISDKLAGINAARFHDWQPDFTPENARQAILAFKGDVYTGLQAETFSEDDFDFAQQHLRMLSGLYGVLRPLDLMQPYRLEMGIRLENARGKDLYQFWGDIITNKLNEALAAQGDNVVINLASDEYFKSVKPKKLNAEIIKPVFLDEKNGKFKIISFYAKKARGLMSRFIIENRLTKPEQLTGFNSEGYFFDEASSSNGELVFKRYEQR</sequence>
<evidence type="ECO:0000255" key="1">
    <source>
        <dbReference type="HAMAP-Rule" id="MF_00652"/>
    </source>
</evidence>
<keyword id="KW-1185">Reference proteome</keyword>
<organism>
    <name type="scientific">Escherichia coli O157:H7</name>
    <dbReference type="NCBI Taxonomy" id="83334"/>
    <lineage>
        <taxon>Bacteria</taxon>
        <taxon>Pseudomonadati</taxon>
        <taxon>Pseudomonadota</taxon>
        <taxon>Gammaproteobacteria</taxon>
        <taxon>Enterobacterales</taxon>
        <taxon>Enterobacteriaceae</taxon>
        <taxon>Escherichia</taxon>
    </lineage>
</organism>
<gene>
    <name evidence="1" type="primary">yaaA</name>
    <name type="ordered locus">Z0006</name>
    <name type="ordered locus">ECs0006</name>
</gene>